<keyword id="KW-1185">Reference proteome</keyword>
<keyword id="KW-0678">Repressor</keyword>
<keyword id="KW-0687">Ribonucleoprotein</keyword>
<keyword id="KW-0689">Ribosomal protein</keyword>
<keyword id="KW-0694">RNA-binding</keyword>
<keyword id="KW-0699">rRNA-binding</keyword>
<keyword id="KW-0810">Translation regulation</keyword>
<keyword id="KW-0820">tRNA-binding</keyword>
<dbReference type="EMBL" id="AM946015">
    <property type="protein sequence ID" value="CAR41193.1"/>
    <property type="molecule type" value="Genomic_DNA"/>
</dbReference>
<dbReference type="RefSeq" id="WP_012658014.1">
    <property type="nucleotide sequence ID" value="NC_012004.1"/>
</dbReference>
<dbReference type="SMR" id="B9DRE9"/>
<dbReference type="STRING" id="218495.SUB0482"/>
<dbReference type="GeneID" id="93825781"/>
<dbReference type="KEGG" id="sub:SUB0482"/>
<dbReference type="eggNOG" id="COG0081">
    <property type="taxonomic scope" value="Bacteria"/>
</dbReference>
<dbReference type="HOGENOM" id="CLU_062853_0_0_9"/>
<dbReference type="OrthoDB" id="9803740at2"/>
<dbReference type="Proteomes" id="UP000000449">
    <property type="component" value="Chromosome"/>
</dbReference>
<dbReference type="GO" id="GO:0015934">
    <property type="term" value="C:large ribosomal subunit"/>
    <property type="evidence" value="ECO:0007669"/>
    <property type="project" value="InterPro"/>
</dbReference>
<dbReference type="GO" id="GO:0019843">
    <property type="term" value="F:rRNA binding"/>
    <property type="evidence" value="ECO:0007669"/>
    <property type="project" value="UniProtKB-UniRule"/>
</dbReference>
<dbReference type="GO" id="GO:0003735">
    <property type="term" value="F:structural constituent of ribosome"/>
    <property type="evidence" value="ECO:0007669"/>
    <property type="project" value="InterPro"/>
</dbReference>
<dbReference type="GO" id="GO:0000049">
    <property type="term" value="F:tRNA binding"/>
    <property type="evidence" value="ECO:0007669"/>
    <property type="project" value="UniProtKB-KW"/>
</dbReference>
<dbReference type="GO" id="GO:0006417">
    <property type="term" value="P:regulation of translation"/>
    <property type="evidence" value="ECO:0007669"/>
    <property type="project" value="UniProtKB-KW"/>
</dbReference>
<dbReference type="GO" id="GO:0006412">
    <property type="term" value="P:translation"/>
    <property type="evidence" value="ECO:0007669"/>
    <property type="project" value="UniProtKB-UniRule"/>
</dbReference>
<dbReference type="CDD" id="cd00403">
    <property type="entry name" value="Ribosomal_L1"/>
    <property type="match status" value="1"/>
</dbReference>
<dbReference type="FunFam" id="3.40.50.790:FF:000001">
    <property type="entry name" value="50S ribosomal protein L1"/>
    <property type="match status" value="1"/>
</dbReference>
<dbReference type="Gene3D" id="3.30.190.20">
    <property type="match status" value="1"/>
</dbReference>
<dbReference type="Gene3D" id="3.40.50.790">
    <property type="match status" value="1"/>
</dbReference>
<dbReference type="HAMAP" id="MF_01318_B">
    <property type="entry name" value="Ribosomal_uL1_B"/>
    <property type="match status" value="1"/>
</dbReference>
<dbReference type="InterPro" id="IPR005878">
    <property type="entry name" value="Ribosom_uL1_bac-type"/>
</dbReference>
<dbReference type="InterPro" id="IPR002143">
    <property type="entry name" value="Ribosomal_uL1"/>
</dbReference>
<dbReference type="InterPro" id="IPR023674">
    <property type="entry name" value="Ribosomal_uL1-like"/>
</dbReference>
<dbReference type="InterPro" id="IPR028364">
    <property type="entry name" value="Ribosomal_uL1/biogenesis"/>
</dbReference>
<dbReference type="InterPro" id="IPR016095">
    <property type="entry name" value="Ribosomal_uL1_3-a/b-sand"/>
</dbReference>
<dbReference type="InterPro" id="IPR023673">
    <property type="entry name" value="Ribosomal_uL1_CS"/>
</dbReference>
<dbReference type="NCBIfam" id="TIGR01169">
    <property type="entry name" value="rplA_bact"/>
    <property type="match status" value="1"/>
</dbReference>
<dbReference type="PANTHER" id="PTHR36427">
    <property type="entry name" value="54S RIBOSOMAL PROTEIN L1, MITOCHONDRIAL"/>
    <property type="match status" value="1"/>
</dbReference>
<dbReference type="PANTHER" id="PTHR36427:SF3">
    <property type="entry name" value="LARGE RIBOSOMAL SUBUNIT PROTEIN UL1M"/>
    <property type="match status" value="1"/>
</dbReference>
<dbReference type="Pfam" id="PF00687">
    <property type="entry name" value="Ribosomal_L1"/>
    <property type="match status" value="1"/>
</dbReference>
<dbReference type="PIRSF" id="PIRSF002155">
    <property type="entry name" value="Ribosomal_L1"/>
    <property type="match status" value="1"/>
</dbReference>
<dbReference type="SUPFAM" id="SSF56808">
    <property type="entry name" value="Ribosomal protein L1"/>
    <property type="match status" value="1"/>
</dbReference>
<dbReference type="PROSITE" id="PS01199">
    <property type="entry name" value="RIBOSOMAL_L1"/>
    <property type="match status" value="1"/>
</dbReference>
<organism>
    <name type="scientific">Streptococcus uberis (strain ATCC BAA-854 / 0140J)</name>
    <dbReference type="NCBI Taxonomy" id="218495"/>
    <lineage>
        <taxon>Bacteria</taxon>
        <taxon>Bacillati</taxon>
        <taxon>Bacillota</taxon>
        <taxon>Bacilli</taxon>
        <taxon>Lactobacillales</taxon>
        <taxon>Streptococcaceae</taxon>
        <taxon>Streptococcus</taxon>
    </lineage>
</organism>
<evidence type="ECO:0000255" key="1">
    <source>
        <dbReference type="HAMAP-Rule" id="MF_01318"/>
    </source>
</evidence>
<evidence type="ECO:0000305" key="2"/>
<name>RL1_STRU0</name>
<reference key="1">
    <citation type="journal article" date="2009" name="BMC Genomics">
        <title>Evidence for niche adaptation in the genome of the bovine pathogen Streptococcus uberis.</title>
        <authorList>
            <person name="Ward P.N."/>
            <person name="Holden M.T.G."/>
            <person name="Leigh J.A."/>
            <person name="Lennard N."/>
            <person name="Bignell A."/>
            <person name="Barron A."/>
            <person name="Clark L."/>
            <person name="Quail M.A."/>
            <person name="Woodward J."/>
            <person name="Barrell B.G."/>
            <person name="Egan S.A."/>
            <person name="Field T.R."/>
            <person name="Maskell D."/>
            <person name="Kehoe M."/>
            <person name="Dowson C.G."/>
            <person name="Chanter N."/>
            <person name="Whatmore A.M."/>
            <person name="Bentley S.D."/>
            <person name="Parkhill J."/>
        </authorList>
    </citation>
    <scope>NUCLEOTIDE SEQUENCE [LARGE SCALE GENOMIC DNA]</scope>
    <source>
        <strain>ATCC BAA-854 / 0140J</strain>
    </source>
</reference>
<comment type="function">
    <text evidence="1">Binds directly to 23S rRNA. The L1 stalk is quite mobile in the ribosome, and is involved in E site tRNA release.</text>
</comment>
<comment type="function">
    <text evidence="1">Protein L1 is also a translational repressor protein, it controls the translation of the L11 operon by binding to its mRNA.</text>
</comment>
<comment type="subunit">
    <text evidence="1">Part of the 50S ribosomal subunit.</text>
</comment>
<comment type="similarity">
    <text evidence="1">Belongs to the universal ribosomal protein uL1 family.</text>
</comment>
<proteinExistence type="inferred from homology"/>
<feature type="chain" id="PRO_1000165703" description="Large ribosomal subunit protein uL1">
    <location>
        <begin position="1"/>
        <end position="229"/>
    </location>
</feature>
<protein>
    <recommendedName>
        <fullName evidence="1">Large ribosomal subunit protein uL1</fullName>
    </recommendedName>
    <alternativeName>
        <fullName evidence="2">50S ribosomal protein L1</fullName>
    </alternativeName>
</protein>
<gene>
    <name evidence="1" type="primary">rplA</name>
    <name type="ordered locus">SUB0482</name>
</gene>
<sequence>MAKKSKQMRAALEKVDSTKAYSVEEAVALIKETNFAKFDASVEVAYNLNIDVRKADQQIRGAMVLPNGTGKTQRVLVFARGAKAEEAKAAGADFVGEDDLVAKINGGWLDFDVVIATPDMMAIVGRLGRVLGPRNLMPNPKTGTVTMDVAKAVEESKGGKITYRADKAGNVQAIIGKVSFDADKLVENFKAFNDVMVKSKPSTAKGTYMTNVSITSTQGVGIKVDPSSL</sequence>
<accession>B9DRE9</accession>